<dbReference type="EC" id="1.-.-.-" evidence="4"/>
<dbReference type="EMBL" id="AB573296">
    <property type="protein sequence ID" value="BAK09429.1"/>
    <property type="molecule type" value="mRNA"/>
</dbReference>
<dbReference type="SMR" id="F1SY85"/>
<dbReference type="GlyCosmos" id="F1SY85">
    <property type="glycosylation" value="2 sites, No reported glycans"/>
</dbReference>
<dbReference type="GO" id="GO:0020037">
    <property type="term" value="F:heme binding"/>
    <property type="evidence" value="ECO:0007669"/>
    <property type="project" value="InterPro"/>
</dbReference>
<dbReference type="GO" id="GO:0005506">
    <property type="term" value="F:iron ion binding"/>
    <property type="evidence" value="ECO:0007669"/>
    <property type="project" value="InterPro"/>
</dbReference>
<dbReference type="GO" id="GO:0004497">
    <property type="term" value="F:monooxygenase activity"/>
    <property type="evidence" value="ECO:0007669"/>
    <property type="project" value="UniProtKB-KW"/>
</dbReference>
<dbReference type="GO" id="GO:0016705">
    <property type="term" value="F:oxidoreductase activity, acting on paired donors, with incorporation or reduction of molecular oxygen"/>
    <property type="evidence" value="ECO:0007669"/>
    <property type="project" value="InterPro"/>
</dbReference>
<dbReference type="CDD" id="cd11069">
    <property type="entry name" value="CYP_FUM15-like"/>
    <property type="match status" value="1"/>
</dbReference>
<dbReference type="Gene3D" id="1.10.630.10">
    <property type="entry name" value="Cytochrome P450"/>
    <property type="match status" value="1"/>
</dbReference>
<dbReference type="InterPro" id="IPR001128">
    <property type="entry name" value="Cyt_P450"/>
</dbReference>
<dbReference type="InterPro" id="IPR002401">
    <property type="entry name" value="Cyt_P450_E_grp-I"/>
</dbReference>
<dbReference type="InterPro" id="IPR036396">
    <property type="entry name" value="Cyt_P450_sf"/>
</dbReference>
<dbReference type="InterPro" id="IPR050121">
    <property type="entry name" value="Cytochrome_P450_monoxygenase"/>
</dbReference>
<dbReference type="PANTHER" id="PTHR24305">
    <property type="entry name" value="CYTOCHROME P450"/>
    <property type="match status" value="1"/>
</dbReference>
<dbReference type="PANTHER" id="PTHR24305:SF166">
    <property type="entry name" value="CYTOCHROME P450 12A4, MITOCHONDRIAL-RELATED"/>
    <property type="match status" value="1"/>
</dbReference>
<dbReference type="Pfam" id="PF00067">
    <property type="entry name" value="p450"/>
    <property type="match status" value="1"/>
</dbReference>
<dbReference type="PRINTS" id="PR00463">
    <property type="entry name" value="EP450I"/>
</dbReference>
<dbReference type="PRINTS" id="PR00385">
    <property type="entry name" value="P450"/>
</dbReference>
<dbReference type="SUPFAM" id="SSF48264">
    <property type="entry name" value="Cytochrome P450"/>
    <property type="match status" value="1"/>
</dbReference>
<gene>
    <name evidence="5" type="primary">CYP091</name>
    <name evidence="5" type="synonym">CYP5150D12v1</name>
</gene>
<accession>F1SY85</accession>
<comment type="function">
    <text evidence="4">Cytochrome P450 monooxygenase that is able to use dehydroabietic acid as a substrate for oxidation.</text>
</comment>
<comment type="cofactor">
    <cofactor evidence="1">
        <name>heme</name>
        <dbReference type="ChEBI" id="CHEBI:30413"/>
    </cofactor>
</comment>
<comment type="pathway">
    <text evidence="6">Secondary metabolite biosynthesis.</text>
</comment>
<comment type="similarity">
    <text evidence="6">Belongs to the cytochrome P450 family.</text>
</comment>
<protein>
    <recommendedName>
        <fullName evidence="5">Cytochrome P450 monooxygenase 91</fullName>
        <ecNumber evidence="4">1.-.-.-</ecNumber>
    </recommendedName>
</protein>
<name>CY091_POSPM</name>
<evidence type="ECO:0000250" key="1">
    <source>
        <dbReference type="UniProtKB" id="P04798"/>
    </source>
</evidence>
<evidence type="ECO:0000255" key="2"/>
<evidence type="ECO:0000255" key="3">
    <source>
        <dbReference type="PROSITE-ProRule" id="PRU00498"/>
    </source>
</evidence>
<evidence type="ECO:0000269" key="4">
    <source>
    </source>
</evidence>
<evidence type="ECO:0000303" key="5">
    <source>
    </source>
</evidence>
<evidence type="ECO:0000305" key="6"/>
<reference key="1">
    <citation type="journal article" date="2012" name="Arch. Microbiol.">
        <title>Molecular identification and functional characterization of cytochrome P450 monooxygenases from the brown-rot basidiomycete Postia placenta.</title>
        <authorList>
            <person name="Ide M."/>
            <person name="Ichinose H."/>
            <person name="Wariishi H."/>
        </authorList>
    </citation>
    <scope>NUCLEOTIDE SEQUENCE [MRNA]</scope>
    <scope>IDENTIFICATION</scope>
    <scope>FUNCTION</scope>
    <scope>CATALYTIC ACTIVITY</scope>
    <source>
        <strain>ATCC 44394 / Madison 698-R</strain>
    </source>
</reference>
<organism>
    <name type="scientific">Postia placenta (strain ATCC 44394 / Madison 698-R)</name>
    <name type="common">Brown rot fungus</name>
    <name type="synonym">Poria monticola</name>
    <dbReference type="NCBI Taxonomy" id="561896"/>
    <lineage>
        <taxon>Eukaryota</taxon>
        <taxon>Fungi</taxon>
        <taxon>Dikarya</taxon>
        <taxon>Basidiomycota</taxon>
        <taxon>Agaricomycotina</taxon>
        <taxon>Agaricomycetes</taxon>
        <taxon>Polyporales</taxon>
        <taxon>Adustoporiaceae</taxon>
        <taxon>Rhodonia</taxon>
    </lineage>
</organism>
<feature type="signal peptide" evidence="2">
    <location>
        <begin position="1"/>
        <end position="22"/>
    </location>
</feature>
<feature type="chain" id="PRO_0000451365" description="Cytochrome P450 monooxygenase 91" evidence="2">
    <location>
        <begin position="23"/>
        <end position="542"/>
    </location>
</feature>
<feature type="binding site" description="axial binding residue" evidence="1">
    <location>
        <position position="482"/>
    </location>
    <ligand>
        <name>heme</name>
        <dbReference type="ChEBI" id="CHEBI:30413"/>
    </ligand>
    <ligandPart>
        <name>Fe</name>
        <dbReference type="ChEBI" id="CHEBI:18248"/>
    </ligandPart>
</feature>
<feature type="glycosylation site" description="N-linked (GlcNAc...) asparagine" evidence="3">
    <location>
        <position position="299"/>
    </location>
</feature>
<feature type="glycosylation site" description="N-linked (GlcNAc...) asparagine" evidence="3">
    <location>
        <position position="392"/>
    </location>
</feature>
<sequence>MLDILRFVLICGILWILRRVLLRVFIHSPLDKIPGPPPVSFAKGNLPQLYDRNGWDFIKGLGEKYGGVVKINGLYGAKMLFVFDPAALSSVVVKDQYVYERSEDATKSTRLMLGDGLLTSQGETHRKQRKLMNPVFSINHMRDMMPIFYQISRNLRDAIASRIDNGEKEIDVLDWMARTALELVGQAGLGYSFDPLVQDKADAYAEAIKALVPTAFGLRLYRPLLPIALKIGTPAIRRRILKLIPSTRLQRMREISDAIDAHSKRIFEEKKQALARGDEAVLKQVGAGKDILSRLMQANMTASEEDRLPENELLGQMSTFIFAGMDTTSGALAHTLQLLAEHPDVQDKMRAEIVAALGGGQEIPYDTLVDLPYLDAVCRETLRLYAPVTTVNRTAQEDIVLPLSEPIRGTDGNLIQEIPVPKGTEVIVGILASNRNPALWGPDAAEWKPERWLEPLPDTINTARVPGVYSHLMTFLGGGRACIGFKFSQLEMKVVLAVLLSSFKFSLSSKEIVWNVAGIQYPTVGASGKPEMPMKIDRVKNT</sequence>
<proteinExistence type="evidence at protein level"/>
<keyword id="KW-0325">Glycoprotein</keyword>
<keyword id="KW-0349">Heme</keyword>
<keyword id="KW-0408">Iron</keyword>
<keyword id="KW-0479">Metal-binding</keyword>
<keyword id="KW-0503">Monooxygenase</keyword>
<keyword id="KW-0560">Oxidoreductase</keyword>
<keyword id="KW-0732">Signal</keyword>